<sequence>MTEVQKLTNNKEVIAYLVEKFPLCFSLEGEAKPLKIGLFQDLAEALQDDERVSKTQLRQALRAYTSNWRYLHGCKAGAERVDLQGNVCGILEQEHAEHAAQQLAEAKAKVAAMRAAEKAAKPEKKRPARRVAAKGQHAKETTTNKAKVTRKPKVILNAIELASLQKGDSVKVKVGESAKKAIVLEVVKDSARVQLENGLVITVTAEHLFA</sequence>
<keyword id="KW-0143">Chaperone</keyword>
<keyword id="KW-0963">Cytoplasm</keyword>
<keyword id="KW-1185">Reference proteome</keyword>
<keyword id="KW-0694">RNA-binding</keyword>
<comment type="function">
    <text evidence="1">RNA chaperone with significant RNA binding, RNA strand exchange and RNA duplexing activities.</text>
</comment>
<comment type="subcellular location">
    <subcellularLocation>
        <location evidence="1">Cytoplasm</location>
    </subcellularLocation>
</comment>
<comment type="similarity">
    <text evidence="1">Belongs to the ProQ family.</text>
</comment>
<comment type="sequence caution" evidence="3">
    <conflict type="erroneous initiation">
        <sequence resource="EMBL-CDS" id="AAK02352"/>
    </conflict>
</comment>
<gene>
    <name evidence="1" type="primary">proQ</name>
    <name type="ordered locus">PM0268</name>
</gene>
<name>PROQ_PASMU</name>
<dbReference type="EMBL" id="AE004439">
    <property type="protein sequence ID" value="AAK02352.1"/>
    <property type="status" value="ALT_INIT"/>
    <property type="molecule type" value="Genomic_DNA"/>
</dbReference>
<dbReference type="RefSeq" id="WP_041422519.1">
    <property type="nucleotide sequence ID" value="NC_002663.1"/>
</dbReference>
<dbReference type="SMR" id="Q9CP02"/>
<dbReference type="STRING" id="272843.PM0268"/>
<dbReference type="EnsemblBacteria" id="AAK02352">
    <property type="protein sequence ID" value="AAK02352"/>
    <property type="gene ID" value="PM0268"/>
</dbReference>
<dbReference type="KEGG" id="pmu:PM0268"/>
<dbReference type="PATRIC" id="fig|272843.6.peg.277"/>
<dbReference type="HOGENOM" id="CLU_113254_0_0_6"/>
<dbReference type="OrthoDB" id="8421419at2"/>
<dbReference type="Proteomes" id="UP000000809">
    <property type="component" value="Chromosome"/>
</dbReference>
<dbReference type="GO" id="GO:0005829">
    <property type="term" value="C:cytosol"/>
    <property type="evidence" value="ECO:0007669"/>
    <property type="project" value="TreeGrafter"/>
</dbReference>
<dbReference type="GO" id="GO:0033592">
    <property type="term" value="F:RNA strand annealing activity"/>
    <property type="evidence" value="ECO:0007669"/>
    <property type="project" value="UniProtKB-UniRule"/>
</dbReference>
<dbReference type="GO" id="GO:0034057">
    <property type="term" value="F:RNA strand-exchange activity"/>
    <property type="evidence" value="ECO:0007669"/>
    <property type="project" value="UniProtKB-UniRule"/>
</dbReference>
<dbReference type="GO" id="GO:0010608">
    <property type="term" value="P:post-transcriptional regulation of gene expression"/>
    <property type="evidence" value="ECO:0007669"/>
    <property type="project" value="InterPro"/>
</dbReference>
<dbReference type="FunFam" id="1.10.1710.10:FF:000001">
    <property type="entry name" value="RNA chaperone ProQ"/>
    <property type="match status" value="1"/>
</dbReference>
<dbReference type="Gene3D" id="1.10.1710.10">
    <property type="entry name" value="ProQ/FinO domain"/>
    <property type="match status" value="1"/>
</dbReference>
<dbReference type="HAMAP" id="MF_00749">
    <property type="entry name" value="ProQ"/>
    <property type="match status" value="1"/>
</dbReference>
<dbReference type="InterPro" id="IPR023529">
    <property type="entry name" value="ProQ"/>
</dbReference>
<dbReference type="InterPro" id="IPR016103">
    <property type="entry name" value="ProQ/FinO"/>
</dbReference>
<dbReference type="InterPro" id="IPR036442">
    <property type="entry name" value="ProQ/FinO_sf"/>
</dbReference>
<dbReference type="InterPro" id="IPR035236">
    <property type="entry name" value="ProQ_C"/>
</dbReference>
<dbReference type="NCBIfam" id="NF003434">
    <property type="entry name" value="PRK04950.1"/>
    <property type="match status" value="1"/>
</dbReference>
<dbReference type="PANTHER" id="PTHR38106">
    <property type="entry name" value="RNA CHAPERONE PROQ"/>
    <property type="match status" value="1"/>
</dbReference>
<dbReference type="PANTHER" id="PTHR38106:SF1">
    <property type="entry name" value="RNA CHAPERONE PROQ"/>
    <property type="match status" value="1"/>
</dbReference>
<dbReference type="Pfam" id="PF04352">
    <property type="entry name" value="ProQ"/>
    <property type="match status" value="1"/>
</dbReference>
<dbReference type="Pfam" id="PF17516">
    <property type="entry name" value="ProQ_C"/>
    <property type="match status" value="1"/>
</dbReference>
<dbReference type="SMART" id="SM00945">
    <property type="entry name" value="ProQ"/>
    <property type="match status" value="1"/>
</dbReference>
<dbReference type="SUPFAM" id="SSF48657">
    <property type="entry name" value="FinO-like"/>
    <property type="match status" value="1"/>
</dbReference>
<evidence type="ECO:0000255" key="1">
    <source>
        <dbReference type="HAMAP-Rule" id="MF_00749"/>
    </source>
</evidence>
<evidence type="ECO:0000256" key="2">
    <source>
        <dbReference type="SAM" id="MobiDB-lite"/>
    </source>
</evidence>
<evidence type="ECO:0000305" key="3"/>
<organism>
    <name type="scientific">Pasteurella multocida (strain Pm70)</name>
    <dbReference type="NCBI Taxonomy" id="272843"/>
    <lineage>
        <taxon>Bacteria</taxon>
        <taxon>Pseudomonadati</taxon>
        <taxon>Pseudomonadota</taxon>
        <taxon>Gammaproteobacteria</taxon>
        <taxon>Pasteurellales</taxon>
        <taxon>Pasteurellaceae</taxon>
        <taxon>Pasteurella</taxon>
    </lineage>
</organism>
<proteinExistence type="inferred from homology"/>
<feature type="chain" id="PRO_0000214619" description="RNA chaperone ProQ">
    <location>
        <begin position="1"/>
        <end position="210"/>
    </location>
</feature>
<feature type="region of interest" description="Disordered" evidence="2">
    <location>
        <begin position="118"/>
        <end position="146"/>
    </location>
</feature>
<feature type="compositionally biased region" description="Basic residues" evidence="2">
    <location>
        <begin position="123"/>
        <end position="132"/>
    </location>
</feature>
<accession>Q9CP02</accession>
<reference key="1">
    <citation type="journal article" date="2001" name="Proc. Natl. Acad. Sci. U.S.A.">
        <title>Complete genomic sequence of Pasteurella multocida Pm70.</title>
        <authorList>
            <person name="May B.J."/>
            <person name="Zhang Q."/>
            <person name="Li L.L."/>
            <person name="Paustian M.L."/>
            <person name="Whittam T.S."/>
            <person name="Kapur V."/>
        </authorList>
    </citation>
    <scope>NUCLEOTIDE SEQUENCE [LARGE SCALE GENOMIC DNA]</scope>
    <source>
        <strain>Pm70</strain>
    </source>
</reference>
<protein>
    <recommendedName>
        <fullName evidence="1">RNA chaperone ProQ</fullName>
    </recommendedName>
</protein>